<organism>
    <name type="scientific">Aquifex aeolicus (strain VF5)</name>
    <dbReference type="NCBI Taxonomy" id="224324"/>
    <lineage>
        <taxon>Bacteria</taxon>
        <taxon>Pseudomonadati</taxon>
        <taxon>Aquificota</taxon>
        <taxon>Aquificia</taxon>
        <taxon>Aquificales</taxon>
        <taxon>Aquificaceae</taxon>
        <taxon>Aquifex</taxon>
    </lineage>
</organism>
<proteinExistence type="predicted"/>
<evidence type="ECO:0000255" key="1"/>
<evidence type="ECO:0000305" key="2"/>
<feature type="chain" id="PRO_0000186884" description="Uncharacterized protein aq_836">
    <location>
        <begin position="1"/>
        <end position="232"/>
    </location>
</feature>
<feature type="transmembrane region" description="Helical" evidence="1">
    <location>
        <begin position="4"/>
        <end position="24"/>
    </location>
</feature>
<feature type="transmembrane region" description="Helical" evidence="1">
    <location>
        <begin position="42"/>
        <end position="62"/>
    </location>
</feature>
<feature type="transmembrane region" description="Helical" evidence="1">
    <location>
        <begin position="100"/>
        <end position="120"/>
    </location>
</feature>
<feature type="transmembrane region" description="Helical" evidence="1">
    <location>
        <begin position="145"/>
        <end position="165"/>
    </location>
</feature>
<feature type="transmembrane region" description="Helical" evidence="1">
    <location>
        <begin position="171"/>
        <end position="191"/>
    </location>
</feature>
<gene>
    <name type="ordered locus">aq_836</name>
</gene>
<name>Y836_AQUAE</name>
<accession>O67008</accession>
<keyword id="KW-1003">Cell membrane</keyword>
<keyword id="KW-0472">Membrane</keyword>
<keyword id="KW-1185">Reference proteome</keyword>
<keyword id="KW-0812">Transmembrane</keyword>
<keyword id="KW-1133">Transmembrane helix</keyword>
<protein>
    <recommendedName>
        <fullName>Uncharacterized protein aq_836</fullName>
    </recommendedName>
</protein>
<reference key="1">
    <citation type="journal article" date="1998" name="Nature">
        <title>The complete genome of the hyperthermophilic bacterium Aquifex aeolicus.</title>
        <authorList>
            <person name="Deckert G."/>
            <person name="Warren P.V."/>
            <person name="Gaasterland T."/>
            <person name="Young W.G."/>
            <person name="Lenox A.L."/>
            <person name="Graham D.E."/>
            <person name="Overbeek R."/>
            <person name="Snead M.A."/>
            <person name="Keller M."/>
            <person name="Aujay M."/>
            <person name="Huber R."/>
            <person name="Feldman R.A."/>
            <person name="Short J.M."/>
            <person name="Olsen G.J."/>
            <person name="Swanson R.V."/>
        </authorList>
    </citation>
    <scope>NUCLEOTIDE SEQUENCE [LARGE SCALE GENOMIC DNA]</scope>
    <source>
        <strain>VF5</strain>
    </source>
</reference>
<comment type="subcellular location">
    <subcellularLocation>
        <location evidence="2">Cell membrane</location>
        <topology evidence="2">Multi-pass membrane protein</topology>
    </subcellularLocation>
</comment>
<sequence>MIKLLGVFFVPIIPFSFVVDYVFENCKSCRNYFFPVLVLLGVLVGALGVGKAGTLLILLAVLTSIAYTYRLFRVQNYEEWLLTYYIAVASLSWLHPEKMLFFISAFAIPLTVIHFLILHMKNQGAKPEVEEFKGIATYLPVLGTLAFVALVSSLVIAPAYAFFTLYGVFKGNLILTPILLIEWLVWLWVGFKMFSPVFFEEKAEAPKYEDLDFSEVFPLTFLLFLGLLLPVL</sequence>
<dbReference type="EMBL" id="AE000657">
    <property type="protein sequence ID" value="AAC06970.1"/>
    <property type="molecule type" value="Genomic_DNA"/>
</dbReference>
<dbReference type="PIR" id="E70372">
    <property type="entry name" value="E70372"/>
</dbReference>
<dbReference type="RefSeq" id="NP_213569.1">
    <property type="nucleotide sequence ID" value="NC_000918.1"/>
</dbReference>
<dbReference type="RefSeq" id="WP_010880507.1">
    <property type="nucleotide sequence ID" value="NC_000918.1"/>
</dbReference>
<dbReference type="SMR" id="O67008"/>
<dbReference type="EnsemblBacteria" id="AAC06970">
    <property type="protein sequence ID" value="AAC06970"/>
    <property type="gene ID" value="aq_836"/>
</dbReference>
<dbReference type="KEGG" id="aae:aq_836"/>
<dbReference type="PATRIC" id="fig|224324.8.peg.654"/>
<dbReference type="HOGENOM" id="CLU_1192810_0_0_0"/>
<dbReference type="InParanoid" id="O67008"/>
<dbReference type="Proteomes" id="UP000000798">
    <property type="component" value="Chromosome"/>
</dbReference>
<dbReference type="GO" id="GO:0005886">
    <property type="term" value="C:plasma membrane"/>
    <property type="evidence" value="ECO:0007669"/>
    <property type="project" value="UniProtKB-SubCell"/>
</dbReference>